<keyword id="KW-0007">Acetylation</keyword>
<keyword id="KW-0030">Aminoacyl-tRNA synthetase</keyword>
<keyword id="KW-0067">ATP-binding</keyword>
<keyword id="KW-0963">Cytoplasm</keyword>
<keyword id="KW-0436">Ligase</keyword>
<keyword id="KW-0547">Nucleotide-binding</keyword>
<keyword id="KW-0648">Protein biosynthesis</keyword>
<keyword id="KW-0694">RNA-binding</keyword>
<reference key="1">
    <citation type="journal article" date="2008" name="DNA Res.">
        <title>Complete genome sequence and comparative analysis of the wild-type commensal Escherichia coli strain SE11 isolated from a healthy adult.</title>
        <authorList>
            <person name="Oshima K."/>
            <person name="Toh H."/>
            <person name="Ogura Y."/>
            <person name="Sasamoto H."/>
            <person name="Morita H."/>
            <person name="Park S.-H."/>
            <person name="Ooka T."/>
            <person name="Iyoda S."/>
            <person name="Taylor T.D."/>
            <person name="Hayashi T."/>
            <person name="Itoh K."/>
            <person name="Hattori M."/>
        </authorList>
    </citation>
    <scope>NUCLEOTIDE SEQUENCE [LARGE SCALE GENOMIC DNA]</scope>
    <source>
        <strain>SE11</strain>
    </source>
</reference>
<gene>
    <name evidence="1" type="primary">tyrS</name>
    <name type="ordered locus">ECSE_1760</name>
</gene>
<dbReference type="EC" id="6.1.1.1" evidence="1"/>
<dbReference type="EMBL" id="AP009240">
    <property type="protein sequence ID" value="BAG77284.1"/>
    <property type="molecule type" value="Genomic_DNA"/>
</dbReference>
<dbReference type="RefSeq" id="WP_001295400.1">
    <property type="nucleotide sequence ID" value="NC_011415.1"/>
</dbReference>
<dbReference type="SMR" id="B6IB76"/>
<dbReference type="GeneID" id="93775791"/>
<dbReference type="KEGG" id="ecy:ECSE_1760"/>
<dbReference type="HOGENOM" id="CLU_024003_0_3_6"/>
<dbReference type="Proteomes" id="UP000008199">
    <property type="component" value="Chromosome"/>
</dbReference>
<dbReference type="GO" id="GO:0005829">
    <property type="term" value="C:cytosol"/>
    <property type="evidence" value="ECO:0007669"/>
    <property type="project" value="TreeGrafter"/>
</dbReference>
<dbReference type="GO" id="GO:0005524">
    <property type="term" value="F:ATP binding"/>
    <property type="evidence" value="ECO:0007669"/>
    <property type="project" value="UniProtKB-UniRule"/>
</dbReference>
<dbReference type="GO" id="GO:0003723">
    <property type="term" value="F:RNA binding"/>
    <property type="evidence" value="ECO:0007669"/>
    <property type="project" value="UniProtKB-KW"/>
</dbReference>
<dbReference type="GO" id="GO:0004831">
    <property type="term" value="F:tyrosine-tRNA ligase activity"/>
    <property type="evidence" value="ECO:0007669"/>
    <property type="project" value="UniProtKB-UniRule"/>
</dbReference>
<dbReference type="GO" id="GO:0006437">
    <property type="term" value="P:tyrosyl-tRNA aminoacylation"/>
    <property type="evidence" value="ECO:0007669"/>
    <property type="project" value="UniProtKB-UniRule"/>
</dbReference>
<dbReference type="CDD" id="cd00165">
    <property type="entry name" value="S4"/>
    <property type="match status" value="1"/>
</dbReference>
<dbReference type="CDD" id="cd00805">
    <property type="entry name" value="TyrRS_core"/>
    <property type="match status" value="1"/>
</dbReference>
<dbReference type="FunFam" id="1.10.240.10:FF:000001">
    <property type="entry name" value="Tyrosine--tRNA ligase"/>
    <property type="match status" value="1"/>
</dbReference>
<dbReference type="FunFam" id="3.10.290.10:FF:000007">
    <property type="entry name" value="Tyrosine--tRNA ligase"/>
    <property type="match status" value="1"/>
</dbReference>
<dbReference type="FunFam" id="3.40.50.620:FF:000008">
    <property type="entry name" value="Tyrosine--tRNA ligase"/>
    <property type="match status" value="1"/>
</dbReference>
<dbReference type="Gene3D" id="3.40.50.620">
    <property type="entry name" value="HUPs"/>
    <property type="match status" value="1"/>
</dbReference>
<dbReference type="Gene3D" id="3.10.290.10">
    <property type="entry name" value="RNA-binding S4 domain"/>
    <property type="match status" value="1"/>
</dbReference>
<dbReference type="Gene3D" id="1.10.240.10">
    <property type="entry name" value="Tyrosyl-Transfer RNA Synthetase"/>
    <property type="match status" value="1"/>
</dbReference>
<dbReference type="HAMAP" id="MF_02006">
    <property type="entry name" value="Tyr_tRNA_synth_type1"/>
    <property type="match status" value="1"/>
</dbReference>
<dbReference type="InterPro" id="IPR001412">
    <property type="entry name" value="aa-tRNA-synth_I_CS"/>
</dbReference>
<dbReference type="InterPro" id="IPR002305">
    <property type="entry name" value="aa-tRNA-synth_Ic"/>
</dbReference>
<dbReference type="InterPro" id="IPR014729">
    <property type="entry name" value="Rossmann-like_a/b/a_fold"/>
</dbReference>
<dbReference type="InterPro" id="IPR002942">
    <property type="entry name" value="S4_RNA-bd"/>
</dbReference>
<dbReference type="InterPro" id="IPR036986">
    <property type="entry name" value="S4_RNA-bd_sf"/>
</dbReference>
<dbReference type="InterPro" id="IPR054608">
    <property type="entry name" value="SYY-like_C"/>
</dbReference>
<dbReference type="InterPro" id="IPR002307">
    <property type="entry name" value="Tyr-tRNA-ligase"/>
</dbReference>
<dbReference type="InterPro" id="IPR024088">
    <property type="entry name" value="Tyr-tRNA-ligase_bac-type"/>
</dbReference>
<dbReference type="InterPro" id="IPR024107">
    <property type="entry name" value="Tyr-tRNA-ligase_bac_1"/>
</dbReference>
<dbReference type="NCBIfam" id="TIGR00234">
    <property type="entry name" value="tyrS"/>
    <property type="match status" value="1"/>
</dbReference>
<dbReference type="PANTHER" id="PTHR11766:SF0">
    <property type="entry name" value="TYROSINE--TRNA LIGASE, MITOCHONDRIAL"/>
    <property type="match status" value="1"/>
</dbReference>
<dbReference type="PANTHER" id="PTHR11766">
    <property type="entry name" value="TYROSYL-TRNA SYNTHETASE"/>
    <property type="match status" value="1"/>
</dbReference>
<dbReference type="Pfam" id="PF22421">
    <property type="entry name" value="SYY_C-terminal"/>
    <property type="match status" value="1"/>
</dbReference>
<dbReference type="Pfam" id="PF00579">
    <property type="entry name" value="tRNA-synt_1b"/>
    <property type="match status" value="1"/>
</dbReference>
<dbReference type="PRINTS" id="PR01040">
    <property type="entry name" value="TRNASYNTHTYR"/>
</dbReference>
<dbReference type="SMART" id="SM00363">
    <property type="entry name" value="S4"/>
    <property type="match status" value="1"/>
</dbReference>
<dbReference type="SUPFAM" id="SSF55174">
    <property type="entry name" value="Alpha-L RNA-binding motif"/>
    <property type="match status" value="1"/>
</dbReference>
<dbReference type="SUPFAM" id="SSF52374">
    <property type="entry name" value="Nucleotidylyl transferase"/>
    <property type="match status" value="1"/>
</dbReference>
<dbReference type="PROSITE" id="PS00178">
    <property type="entry name" value="AA_TRNA_LIGASE_I"/>
    <property type="match status" value="1"/>
</dbReference>
<dbReference type="PROSITE" id="PS50889">
    <property type="entry name" value="S4"/>
    <property type="match status" value="1"/>
</dbReference>
<evidence type="ECO:0000255" key="1">
    <source>
        <dbReference type="HAMAP-Rule" id="MF_02006"/>
    </source>
</evidence>
<proteinExistence type="inferred from homology"/>
<sequence>MASSNLIKQLQERGLVAQVTDEEALAERLAQGPIALYCGFDPTADSLHLGHLVPLLCLKRFQQAGHKPVALVGGATGLIGDPSFKAAERKLNTEETVQEWVDKIRKQVAPFLDFDCGENSAIAANNYDWFGNMNVLTFLRDIGKHFSVNQMINKEAVKQRLNREDQGISFTEFSYNLLQGYDFACLNKQYGVVLQIGGSDQWGNITSGIDLTRRLHQNQVFGLTVPLITKADGTKFGKTEGGAVWLDPKKTSPYKFYQFWINTADADVYRFLKFFTFMSIEEINALEEEDKNSGKAPRAQYVLAEQVTRLVHGEEGLQAAKRITECLFSGSLSALSEADFEQLAQDGVPMVEMEKGADLMQALVDSELQPSRGQARKTIASNAITINGEKQSDPEYFFKEEDRLFGRFTLLRRGKKNYCLICWK</sequence>
<accession>B6IB76</accession>
<protein>
    <recommendedName>
        <fullName evidence="1">Tyrosine--tRNA ligase</fullName>
        <ecNumber evidence="1">6.1.1.1</ecNumber>
    </recommendedName>
    <alternativeName>
        <fullName evidence="1">Tyrosyl-tRNA synthetase</fullName>
        <shortName evidence="1">TyrRS</shortName>
    </alternativeName>
</protein>
<feature type="chain" id="PRO_1000189296" description="Tyrosine--tRNA ligase">
    <location>
        <begin position="1"/>
        <end position="424"/>
    </location>
</feature>
<feature type="domain" description="S4 RNA-binding" evidence="1">
    <location>
        <begin position="357"/>
        <end position="414"/>
    </location>
</feature>
<feature type="short sequence motif" description="'HIGH' region">
    <location>
        <begin position="42"/>
        <end position="51"/>
    </location>
</feature>
<feature type="short sequence motif" description="'KMSKS' region">
    <location>
        <begin position="235"/>
        <end position="239"/>
    </location>
</feature>
<feature type="binding site" evidence="1">
    <location>
        <position position="37"/>
    </location>
    <ligand>
        <name>L-tyrosine</name>
        <dbReference type="ChEBI" id="CHEBI:58315"/>
    </ligand>
</feature>
<feature type="binding site" evidence="1">
    <location>
        <position position="175"/>
    </location>
    <ligand>
        <name>L-tyrosine</name>
        <dbReference type="ChEBI" id="CHEBI:58315"/>
    </ligand>
</feature>
<feature type="binding site" evidence="1">
    <location>
        <position position="179"/>
    </location>
    <ligand>
        <name>L-tyrosine</name>
        <dbReference type="ChEBI" id="CHEBI:58315"/>
    </ligand>
</feature>
<feature type="binding site" evidence="1">
    <location>
        <position position="238"/>
    </location>
    <ligand>
        <name>ATP</name>
        <dbReference type="ChEBI" id="CHEBI:30616"/>
    </ligand>
</feature>
<feature type="modified residue" description="N6-acetyllysine" evidence="1">
    <location>
        <position position="144"/>
    </location>
</feature>
<organism>
    <name type="scientific">Escherichia coli (strain SE11)</name>
    <dbReference type="NCBI Taxonomy" id="409438"/>
    <lineage>
        <taxon>Bacteria</taxon>
        <taxon>Pseudomonadati</taxon>
        <taxon>Pseudomonadota</taxon>
        <taxon>Gammaproteobacteria</taxon>
        <taxon>Enterobacterales</taxon>
        <taxon>Enterobacteriaceae</taxon>
        <taxon>Escherichia</taxon>
    </lineage>
</organism>
<comment type="function">
    <text evidence="1">Catalyzes the attachment of tyrosine to tRNA(Tyr) in a two-step reaction: tyrosine is first activated by ATP to form Tyr-AMP and then transferred to the acceptor end of tRNA(Tyr).</text>
</comment>
<comment type="catalytic activity">
    <reaction evidence="1">
        <text>tRNA(Tyr) + L-tyrosine + ATP = L-tyrosyl-tRNA(Tyr) + AMP + diphosphate + H(+)</text>
        <dbReference type="Rhea" id="RHEA:10220"/>
        <dbReference type="Rhea" id="RHEA-COMP:9706"/>
        <dbReference type="Rhea" id="RHEA-COMP:9707"/>
        <dbReference type="ChEBI" id="CHEBI:15378"/>
        <dbReference type="ChEBI" id="CHEBI:30616"/>
        <dbReference type="ChEBI" id="CHEBI:33019"/>
        <dbReference type="ChEBI" id="CHEBI:58315"/>
        <dbReference type="ChEBI" id="CHEBI:78442"/>
        <dbReference type="ChEBI" id="CHEBI:78536"/>
        <dbReference type="ChEBI" id="CHEBI:456215"/>
        <dbReference type="EC" id="6.1.1.1"/>
    </reaction>
</comment>
<comment type="subunit">
    <text evidence="1">Homodimer.</text>
</comment>
<comment type="subcellular location">
    <subcellularLocation>
        <location evidence="1">Cytoplasm</location>
    </subcellularLocation>
</comment>
<comment type="similarity">
    <text evidence="1">Belongs to the class-I aminoacyl-tRNA synthetase family. TyrS type 1 subfamily.</text>
</comment>
<name>SYY_ECOSE</name>